<protein>
    <recommendedName>
        <fullName evidence="1">Co-chaperonin GroES</fullName>
    </recommendedName>
    <alternativeName>
        <fullName evidence="1">10 kDa chaperonin</fullName>
    </alternativeName>
    <alternativeName>
        <fullName evidence="1">Chaperonin-10</fullName>
        <shortName evidence="1">Cpn10</shortName>
    </alternativeName>
</protein>
<accession>Q8KF03</accession>
<reference key="1">
    <citation type="journal article" date="2002" name="Proc. Natl. Acad. Sci. U.S.A.">
        <title>The complete genome sequence of Chlorobium tepidum TLS, a photosynthetic, anaerobic, green-sulfur bacterium.</title>
        <authorList>
            <person name="Eisen J.A."/>
            <person name="Nelson K.E."/>
            <person name="Paulsen I.T."/>
            <person name="Heidelberg J.F."/>
            <person name="Wu M."/>
            <person name="Dodson R.J."/>
            <person name="DeBoy R.T."/>
            <person name="Gwinn M.L."/>
            <person name="Nelson W.C."/>
            <person name="Haft D.H."/>
            <person name="Hickey E.K."/>
            <person name="Peterson J.D."/>
            <person name="Durkin A.S."/>
            <person name="Kolonay J.F."/>
            <person name="Yang F."/>
            <person name="Holt I.E."/>
            <person name="Umayam L.A."/>
            <person name="Mason T.M."/>
            <person name="Brenner M."/>
            <person name="Shea T.P."/>
            <person name="Parksey D.S."/>
            <person name="Nierman W.C."/>
            <person name="Feldblyum T.V."/>
            <person name="Hansen C.L."/>
            <person name="Craven M.B."/>
            <person name="Radune D."/>
            <person name="Vamathevan J.J."/>
            <person name="Khouri H.M."/>
            <person name="White O."/>
            <person name="Gruber T.M."/>
            <person name="Ketchum K.A."/>
            <person name="Venter J.C."/>
            <person name="Tettelin H."/>
            <person name="Bryant D.A."/>
            <person name="Fraser C.M."/>
        </authorList>
    </citation>
    <scope>NUCLEOTIDE SEQUENCE [LARGE SCALE GENOMIC DNA]</scope>
    <source>
        <strain>ATCC 49652 / DSM 12025 / NBRC 103806 / TLS</strain>
    </source>
</reference>
<proteinExistence type="inferred from homology"/>
<feature type="chain" id="PRO_0000174730" description="Co-chaperonin GroES">
    <location>
        <begin position="1"/>
        <end position="95"/>
    </location>
</feature>
<dbReference type="EMBL" id="AE006470">
    <property type="protein sequence ID" value="AAM71771.1"/>
    <property type="molecule type" value="Genomic_DNA"/>
</dbReference>
<dbReference type="RefSeq" id="NP_661429.1">
    <property type="nucleotide sequence ID" value="NC_002932.3"/>
</dbReference>
<dbReference type="RefSeq" id="WP_010932216.1">
    <property type="nucleotide sequence ID" value="NC_002932.3"/>
</dbReference>
<dbReference type="SMR" id="Q8KF03"/>
<dbReference type="STRING" id="194439.CT0529"/>
<dbReference type="EnsemblBacteria" id="AAM71771">
    <property type="protein sequence ID" value="AAM71771"/>
    <property type="gene ID" value="CT0529"/>
</dbReference>
<dbReference type="KEGG" id="cte:CT0529"/>
<dbReference type="PATRIC" id="fig|194439.7.peg.497"/>
<dbReference type="eggNOG" id="COG0234">
    <property type="taxonomic scope" value="Bacteria"/>
</dbReference>
<dbReference type="HOGENOM" id="CLU_132825_2_0_10"/>
<dbReference type="OrthoDB" id="9806791at2"/>
<dbReference type="Proteomes" id="UP000001007">
    <property type="component" value="Chromosome"/>
</dbReference>
<dbReference type="GO" id="GO:0005737">
    <property type="term" value="C:cytoplasm"/>
    <property type="evidence" value="ECO:0007669"/>
    <property type="project" value="UniProtKB-SubCell"/>
</dbReference>
<dbReference type="GO" id="GO:0005524">
    <property type="term" value="F:ATP binding"/>
    <property type="evidence" value="ECO:0007669"/>
    <property type="project" value="InterPro"/>
</dbReference>
<dbReference type="GO" id="GO:0046872">
    <property type="term" value="F:metal ion binding"/>
    <property type="evidence" value="ECO:0007669"/>
    <property type="project" value="TreeGrafter"/>
</dbReference>
<dbReference type="GO" id="GO:0044183">
    <property type="term" value="F:protein folding chaperone"/>
    <property type="evidence" value="ECO:0007669"/>
    <property type="project" value="InterPro"/>
</dbReference>
<dbReference type="GO" id="GO:0051087">
    <property type="term" value="F:protein-folding chaperone binding"/>
    <property type="evidence" value="ECO:0007669"/>
    <property type="project" value="TreeGrafter"/>
</dbReference>
<dbReference type="GO" id="GO:0051082">
    <property type="term" value="F:unfolded protein binding"/>
    <property type="evidence" value="ECO:0007669"/>
    <property type="project" value="TreeGrafter"/>
</dbReference>
<dbReference type="GO" id="GO:0051085">
    <property type="term" value="P:chaperone cofactor-dependent protein refolding"/>
    <property type="evidence" value="ECO:0007669"/>
    <property type="project" value="TreeGrafter"/>
</dbReference>
<dbReference type="CDD" id="cd00320">
    <property type="entry name" value="cpn10"/>
    <property type="match status" value="1"/>
</dbReference>
<dbReference type="FunFam" id="2.30.33.40:FF:000001">
    <property type="entry name" value="10 kDa chaperonin"/>
    <property type="match status" value="1"/>
</dbReference>
<dbReference type="Gene3D" id="2.30.33.40">
    <property type="entry name" value="GroES chaperonin"/>
    <property type="match status" value="1"/>
</dbReference>
<dbReference type="HAMAP" id="MF_00580">
    <property type="entry name" value="CH10"/>
    <property type="match status" value="1"/>
</dbReference>
<dbReference type="InterPro" id="IPR020818">
    <property type="entry name" value="Chaperonin_GroES"/>
</dbReference>
<dbReference type="InterPro" id="IPR037124">
    <property type="entry name" value="Chaperonin_GroES_sf"/>
</dbReference>
<dbReference type="InterPro" id="IPR018369">
    <property type="entry name" value="Chaprnonin_Cpn10_CS"/>
</dbReference>
<dbReference type="InterPro" id="IPR011032">
    <property type="entry name" value="GroES-like_sf"/>
</dbReference>
<dbReference type="NCBIfam" id="NF001527">
    <property type="entry name" value="PRK00364.1-2"/>
    <property type="match status" value="1"/>
</dbReference>
<dbReference type="NCBIfam" id="NF001529">
    <property type="entry name" value="PRK00364.1-5"/>
    <property type="match status" value="1"/>
</dbReference>
<dbReference type="NCBIfam" id="NF001531">
    <property type="entry name" value="PRK00364.2-2"/>
    <property type="match status" value="1"/>
</dbReference>
<dbReference type="NCBIfam" id="NF001533">
    <property type="entry name" value="PRK00364.2-4"/>
    <property type="match status" value="1"/>
</dbReference>
<dbReference type="NCBIfam" id="NF001534">
    <property type="entry name" value="PRK00364.2-5"/>
    <property type="match status" value="1"/>
</dbReference>
<dbReference type="PANTHER" id="PTHR10772">
    <property type="entry name" value="10 KDA HEAT SHOCK PROTEIN"/>
    <property type="match status" value="1"/>
</dbReference>
<dbReference type="PANTHER" id="PTHR10772:SF58">
    <property type="entry name" value="CO-CHAPERONIN GROES"/>
    <property type="match status" value="1"/>
</dbReference>
<dbReference type="Pfam" id="PF00166">
    <property type="entry name" value="Cpn10"/>
    <property type="match status" value="1"/>
</dbReference>
<dbReference type="PRINTS" id="PR00297">
    <property type="entry name" value="CHAPERONIN10"/>
</dbReference>
<dbReference type="SMART" id="SM00883">
    <property type="entry name" value="Cpn10"/>
    <property type="match status" value="1"/>
</dbReference>
<dbReference type="SUPFAM" id="SSF50129">
    <property type="entry name" value="GroES-like"/>
    <property type="match status" value="1"/>
</dbReference>
<dbReference type="PROSITE" id="PS00681">
    <property type="entry name" value="CHAPERONINS_CPN10"/>
    <property type="match status" value="1"/>
</dbReference>
<name>CH10_CHLTE</name>
<sequence length="95" mass="10166">MNLKPLADRVIVKPAPAEEKTKGGLYIPDTGKEKPMYGEVVAVGPGKVSDAGQVVAMQVKAGDKVLYGKYSGTEVHVEGEDYLIMRESDIFAILG</sequence>
<comment type="function">
    <text evidence="1">Together with the chaperonin GroEL, plays an essential role in assisting protein folding. The GroEL-GroES system forms a nano-cage that allows encapsulation of the non-native substrate proteins and provides a physical environment optimized to promote and accelerate protein folding. GroES binds to the apical surface of the GroEL ring, thereby capping the opening of the GroEL channel.</text>
</comment>
<comment type="subunit">
    <text evidence="1">Heptamer of 7 subunits arranged in a ring. Interacts with the chaperonin GroEL.</text>
</comment>
<comment type="subcellular location">
    <subcellularLocation>
        <location evidence="1">Cytoplasm</location>
    </subcellularLocation>
</comment>
<comment type="similarity">
    <text evidence="1">Belongs to the GroES chaperonin family.</text>
</comment>
<keyword id="KW-0143">Chaperone</keyword>
<keyword id="KW-0963">Cytoplasm</keyword>
<keyword id="KW-1185">Reference proteome</keyword>
<gene>
    <name evidence="1" type="primary">groES</name>
    <name evidence="1" type="synonym">groS</name>
    <name type="ordered locus">CT0529</name>
</gene>
<organism>
    <name type="scientific">Chlorobaculum tepidum (strain ATCC 49652 / DSM 12025 / NBRC 103806 / TLS)</name>
    <name type="common">Chlorobium tepidum</name>
    <dbReference type="NCBI Taxonomy" id="194439"/>
    <lineage>
        <taxon>Bacteria</taxon>
        <taxon>Pseudomonadati</taxon>
        <taxon>Chlorobiota</taxon>
        <taxon>Chlorobiia</taxon>
        <taxon>Chlorobiales</taxon>
        <taxon>Chlorobiaceae</taxon>
        <taxon>Chlorobaculum</taxon>
    </lineage>
</organism>
<evidence type="ECO:0000255" key="1">
    <source>
        <dbReference type="HAMAP-Rule" id="MF_00580"/>
    </source>
</evidence>